<name>RL2_PROM4</name>
<comment type="function">
    <text evidence="1">One of the primary rRNA binding proteins. Required for association of the 30S and 50S subunits to form the 70S ribosome, for tRNA binding and peptide bond formation. It has been suggested to have peptidyltransferase activity; this is somewhat controversial. Makes several contacts with the 16S rRNA in the 70S ribosome.</text>
</comment>
<comment type="subunit">
    <text evidence="1">Part of the 50S ribosomal subunit. Forms a bridge to the 30S subunit in the 70S ribosome.</text>
</comment>
<comment type="similarity">
    <text evidence="1">Belongs to the universal ribosomal protein uL2 family.</text>
</comment>
<accession>A9BCP4</accession>
<keyword id="KW-1185">Reference proteome</keyword>
<keyword id="KW-0687">Ribonucleoprotein</keyword>
<keyword id="KW-0689">Ribosomal protein</keyword>
<keyword id="KW-0694">RNA-binding</keyword>
<keyword id="KW-0699">rRNA-binding</keyword>
<gene>
    <name evidence="1" type="primary">rplB</name>
    <name evidence="1" type="synonym">rpl2</name>
    <name type="ordered locus">P9211_16751</name>
</gene>
<organism>
    <name type="scientific">Prochlorococcus marinus (strain MIT 9211)</name>
    <dbReference type="NCBI Taxonomy" id="93059"/>
    <lineage>
        <taxon>Bacteria</taxon>
        <taxon>Bacillati</taxon>
        <taxon>Cyanobacteriota</taxon>
        <taxon>Cyanophyceae</taxon>
        <taxon>Synechococcales</taxon>
        <taxon>Prochlorococcaceae</taxon>
        <taxon>Prochlorococcus</taxon>
    </lineage>
</organism>
<proteinExistence type="inferred from homology"/>
<reference key="1">
    <citation type="journal article" date="2007" name="PLoS Genet.">
        <title>Patterns and implications of gene gain and loss in the evolution of Prochlorococcus.</title>
        <authorList>
            <person name="Kettler G.C."/>
            <person name="Martiny A.C."/>
            <person name="Huang K."/>
            <person name="Zucker J."/>
            <person name="Coleman M.L."/>
            <person name="Rodrigue S."/>
            <person name="Chen F."/>
            <person name="Lapidus A."/>
            <person name="Ferriera S."/>
            <person name="Johnson J."/>
            <person name="Steglich C."/>
            <person name="Church G.M."/>
            <person name="Richardson P."/>
            <person name="Chisholm S.W."/>
        </authorList>
    </citation>
    <scope>NUCLEOTIDE SEQUENCE [LARGE SCALE GENOMIC DNA]</scope>
    <source>
        <strain>MIT 9211</strain>
    </source>
</reference>
<evidence type="ECO:0000255" key="1">
    <source>
        <dbReference type="HAMAP-Rule" id="MF_01320"/>
    </source>
</evidence>
<evidence type="ECO:0000256" key="2">
    <source>
        <dbReference type="SAM" id="MobiDB-lite"/>
    </source>
</evidence>
<evidence type="ECO:0000305" key="3"/>
<sequence>MAIRTFRPYTPGTRTRVVTDFNELTGRKPERSLVVSKHRLKGRNNRGVITCRHRGGGHKRLYRIVDFRRNKHDVPAKVAAIHYDPHRNARLALLFYSDGEKRYILAPAGIAIGQEVISGPKVPIETGNAMPLSAIPLGSSVHCVELYAGRGGQMVRSAGASAQVMAKEGDYVALRLPSTEVRLIRRECYATLGEVGNSEIRNTSLGKAGRRRWLGRRPQVRGSVMNPCDHPHGGGEGRAPVGRAGPVTPWGKPALGLKTRKRNKPSNRFVLRKRRRVSKRSRGGRDS</sequence>
<feature type="chain" id="PRO_1000141597" description="Large ribosomal subunit protein uL2">
    <location>
        <begin position="1"/>
        <end position="287"/>
    </location>
</feature>
<feature type="region of interest" description="Disordered" evidence="2">
    <location>
        <begin position="221"/>
        <end position="287"/>
    </location>
</feature>
<feature type="compositionally biased region" description="Basic residues" evidence="2">
    <location>
        <begin position="258"/>
        <end position="287"/>
    </location>
</feature>
<protein>
    <recommendedName>
        <fullName evidence="1">Large ribosomal subunit protein uL2</fullName>
    </recommendedName>
    <alternativeName>
        <fullName evidence="3">50S ribosomal protein L2</fullName>
    </alternativeName>
</protein>
<dbReference type="EMBL" id="CP000878">
    <property type="protein sequence ID" value="ABX09606.1"/>
    <property type="molecule type" value="Genomic_DNA"/>
</dbReference>
<dbReference type="RefSeq" id="WP_012196226.1">
    <property type="nucleotide sequence ID" value="NC_009976.1"/>
</dbReference>
<dbReference type="SMR" id="A9BCP4"/>
<dbReference type="STRING" id="93059.P9211_16751"/>
<dbReference type="KEGG" id="pmj:P9211_16751"/>
<dbReference type="eggNOG" id="COG0090">
    <property type="taxonomic scope" value="Bacteria"/>
</dbReference>
<dbReference type="HOGENOM" id="CLU_036235_2_1_3"/>
<dbReference type="OrthoDB" id="9778722at2"/>
<dbReference type="Proteomes" id="UP000000788">
    <property type="component" value="Chromosome"/>
</dbReference>
<dbReference type="GO" id="GO:0015934">
    <property type="term" value="C:large ribosomal subunit"/>
    <property type="evidence" value="ECO:0007669"/>
    <property type="project" value="InterPro"/>
</dbReference>
<dbReference type="GO" id="GO:0019843">
    <property type="term" value="F:rRNA binding"/>
    <property type="evidence" value="ECO:0007669"/>
    <property type="project" value="UniProtKB-UniRule"/>
</dbReference>
<dbReference type="GO" id="GO:0003735">
    <property type="term" value="F:structural constituent of ribosome"/>
    <property type="evidence" value="ECO:0007669"/>
    <property type="project" value="InterPro"/>
</dbReference>
<dbReference type="GO" id="GO:0016740">
    <property type="term" value="F:transferase activity"/>
    <property type="evidence" value="ECO:0007669"/>
    <property type="project" value="InterPro"/>
</dbReference>
<dbReference type="GO" id="GO:0006412">
    <property type="term" value="P:translation"/>
    <property type="evidence" value="ECO:0007669"/>
    <property type="project" value="UniProtKB-UniRule"/>
</dbReference>
<dbReference type="FunFam" id="2.30.30.30:FF:000001">
    <property type="entry name" value="50S ribosomal protein L2"/>
    <property type="match status" value="1"/>
</dbReference>
<dbReference type="FunFam" id="2.40.50.140:FF:000003">
    <property type="entry name" value="50S ribosomal protein L2"/>
    <property type="match status" value="1"/>
</dbReference>
<dbReference type="FunFam" id="4.10.950.10:FF:000001">
    <property type="entry name" value="50S ribosomal protein L2"/>
    <property type="match status" value="1"/>
</dbReference>
<dbReference type="Gene3D" id="2.30.30.30">
    <property type="match status" value="1"/>
</dbReference>
<dbReference type="Gene3D" id="2.40.50.140">
    <property type="entry name" value="Nucleic acid-binding proteins"/>
    <property type="match status" value="1"/>
</dbReference>
<dbReference type="Gene3D" id="4.10.950.10">
    <property type="entry name" value="Ribosomal protein L2, domain 3"/>
    <property type="match status" value="1"/>
</dbReference>
<dbReference type="HAMAP" id="MF_01320_B">
    <property type="entry name" value="Ribosomal_uL2_B"/>
    <property type="match status" value="1"/>
</dbReference>
<dbReference type="InterPro" id="IPR012340">
    <property type="entry name" value="NA-bd_OB-fold"/>
</dbReference>
<dbReference type="InterPro" id="IPR014722">
    <property type="entry name" value="Rib_uL2_dom2"/>
</dbReference>
<dbReference type="InterPro" id="IPR002171">
    <property type="entry name" value="Ribosomal_uL2"/>
</dbReference>
<dbReference type="InterPro" id="IPR005880">
    <property type="entry name" value="Ribosomal_uL2_bac/org-type"/>
</dbReference>
<dbReference type="InterPro" id="IPR022669">
    <property type="entry name" value="Ribosomal_uL2_C"/>
</dbReference>
<dbReference type="InterPro" id="IPR022671">
    <property type="entry name" value="Ribosomal_uL2_CS"/>
</dbReference>
<dbReference type="InterPro" id="IPR014726">
    <property type="entry name" value="Ribosomal_uL2_dom3"/>
</dbReference>
<dbReference type="InterPro" id="IPR022666">
    <property type="entry name" value="Ribosomal_uL2_RNA-bd_dom"/>
</dbReference>
<dbReference type="InterPro" id="IPR008991">
    <property type="entry name" value="Translation_prot_SH3-like_sf"/>
</dbReference>
<dbReference type="NCBIfam" id="TIGR01171">
    <property type="entry name" value="rplB_bact"/>
    <property type="match status" value="1"/>
</dbReference>
<dbReference type="PANTHER" id="PTHR13691:SF5">
    <property type="entry name" value="LARGE RIBOSOMAL SUBUNIT PROTEIN UL2M"/>
    <property type="match status" value="1"/>
</dbReference>
<dbReference type="PANTHER" id="PTHR13691">
    <property type="entry name" value="RIBOSOMAL PROTEIN L2"/>
    <property type="match status" value="1"/>
</dbReference>
<dbReference type="Pfam" id="PF00181">
    <property type="entry name" value="Ribosomal_L2"/>
    <property type="match status" value="1"/>
</dbReference>
<dbReference type="Pfam" id="PF03947">
    <property type="entry name" value="Ribosomal_L2_C"/>
    <property type="match status" value="1"/>
</dbReference>
<dbReference type="PIRSF" id="PIRSF002158">
    <property type="entry name" value="Ribosomal_L2"/>
    <property type="match status" value="1"/>
</dbReference>
<dbReference type="SMART" id="SM01383">
    <property type="entry name" value="Ribosomal_L2"/>
    <property type="match status" value="1"/>
</dbReference>
<dbReference type="SMART" id="SM01382">
    <property type="entry name" value="Ribosomal_L2_C"/>
    <property type="match status" value="1"/>
</dbReference>
<dbReference type="SUPFAM" id="SSF50249">
    <property type="entry name" value="Nucleic acid-binding proteins"/>
    <property type="match status" value="1"/>
</dbReference>
<dbReference type="SUPFAM" id="SSF50104">
    <property type="entry name" value="Translation proteins SH3-like domain"/>
    <property type="match status" value="1"/>
</dbReference>
<dbReference type="PROSITE" id="PS00467">
    <property type="entry name" value="RIBOSOMAL_L2"/>
    <property type="match status" value="1"/>
</dbReference>